<protein>
    <recommendedName>
        <fullName evidence="1">Ribosome maturation factor RimP</fullName>
    </recommendedName>
</protein>
<sequence>MTTGLPSQTQVIELLGGEFARAGYEIEDVVIDAHARPPRITVIADGDDGLDLDAAATLSRSASALLDKLDTIEDHYVLEVSSPGVDRPLRTPKHFRRARGRKVDVVLSDNSTVTGRVGETGDDTVALVVRAGRDWAIREIPLGDVVKAVVQVEFSPPAQAELELAGVGGTDKTEERRK</sequence>
<name>RIMP_MYCA1</name>
<evidence type="ECO:0000255" key="1">
    <source>
        <dbReference type="HAMAP-Rule" id="MF_01077"/>
    </source>
</evidence>
<feature type="chain" id="PRO_1000064734" description="Ribosome maturation factor RimP">
    <location>
        <begin position="1"/>
        <end position="178"/>
    </location>
</feature>
<comment type="function">
    <text evidence="1">Required for maturation of 30S ribosomal subunits.</text>
</comment>
<comment type="subcellular location">
    <subcellularLocation>
        <location evidence="1">Cytoplasm</location>
    </subcellularLocation>
</comment>
<comment type="similarity">
    <text evidence="1">Belongs to the RimP family.</text>
</comment>
<reference key="1">
    <citation type="submission" date="2006-10" db="EMBL/GenBank/DDBJ databases">
        <authorList>
            <person name="Fleischmann R.D."/>
            <person name="Dodson R.J."/>
            <person name="Haft D.H."/>
            <person name="Merkel J.S."/>
            <person name="Nelson W.C."/>
            <person name="Fraser C.M."/>
        </authorList>
    </citation>
    <scope>NUCLEOTIDE SEQUENCE [LARGE SCALE GENOMIC DNA]</scope>
    <source>
        <strain>104</strain>
    </source>
</reference>
<keyword id="KW-0963">Cytoplasm</keyword>
<keyword id="KW-0690">Ribosome biogenesis</keyword>
<gene>
    <name evidence="1" type="primary">rimP</name>
    <name type="ordered locus">MAV_3696</name>
</gene>
<dbReference type="EMBL" id="CP000479">
    <property type="protein sequence ID" value="ABK66683.1"/>
    <property type="molecule type" value="Genomic_DNA"/>
</dbReference>
<dbReference type="RefSeq" id="WP_011725624.1">
    <property type="nucleotide sequence ID" value="NC_008595.1"/>
</dbReference>
<dbReference type="SMR" id="A0QIY5"/>
<dbReference type="KEGG" id="mav:MAV_3696"/>
<dbReference type="HOGENOM" id="CLU_070525_3_0_11"/>
<dbReference type="Proteomes" id="UP000001574">
    <property type="component" value="Chromosome"/>
</dbReference>
<dbReference type="GO" id="GO:0005829">
    <property type="term" value="C:cytosol"/>
    <property type="evidence" value="ECO:0007669"/>
    <property type="project" value="TreeGrafter"/>
</dbReference>
<dbReference type="GO" id="GO:0000028">
    <property type="term" value="P:ribosomal small subunit assembly"/>
    <property type="evidence" value="ECO:0007669"/>
    <property type="project" value="TreeGrafter"/>
</dbReference>
<dbReference type="GO" id="GO:0006412">
    <property type="term" value="P:translation"/>
    <property type="evidence" value="ECO:0007669"/>
    <property type="project" value="TreeGrafter"/>
</dbReference>
<dbReference type="CDD" id="cd01734">
    <property type="entry name" value="YlxS_C"/>
    <property type="match status" value="1"/>
</dbReference>
<dbReference type="Gene3D" id="3.30.300.70">
    <property type="entry name" value="RimP-like superfamily, N-terminal"/>
    <property type="match status" value="1"/>
</dbReference>
<dbReference type="HAMAP" id="MF_01077">
    <property type="entry name" value="RimP"/>
    <property type="match status" value="1"/>
</dbReference>
<dbReference type="InterPro" id="IPR003728">
    <property type="entry name" value="Ribosome_maturation_RimP"/>
</dbReference>
<dbReference type="InterPro" id="IPR028998">
    <property type="entry name" value="RimP_C"/>
</dbReference>
<dbReference type="InterPro" id="IPR036847">
    <property type="entry name" value="RimP_C_sf"/>
</dbReference>
<dbReference type="InterPro" id="IPR028989">
    <property type="entry name" value="RimP_N"/>
</dbReference>
<dbReference type="InterPro" id="IPR035956">
    <property type="entry name" value="RimP_N_sf"/>
</dbReference>
<dbReference type="NCBIfam" id="NF000930">
    <property type="entry name" value="PRK00092.2-2"/>
    <property type="match status" value="1"/>
</dbReference>
<dbReference type="PANTHER" id="PTHR33867">
    <property type="entry name" value="RIBOSOME MATURATION FACTOR RIMP"/>
    <property type="match status" value="1"/>
</dbReference>
<dbReference type="PANTHER" id="PTHR33867:SF1">
    <property type="entry name" value="RIBOSOME MATURATION FACTOR RIMP"/>
    <property type="match status" value="1"/>
</dbReference>
<dbReference type="Pfam" id="PF17384">
    <property type="entry name" value="DUF150_C"/>
    <property type="match status" value="1"/>
</dbReference>
<dbReference type="Pfam" id="PF02576">
    <property type="entry name" value="RimP_N"/>
    <property type="match status" value="1"/>
</dbReference>
<dbReference type="SUPFAM" id="SSF74942">
    <property type="entry name" value="YhbC-like, C-terminal domain"/>
    <property type="match status" value="1"/>
</dbReference>
<dbReference type="SUPFAM" id="SSF75420">
    <property type="entry name" value="YhbC-like, N-terminal domain"/>
    <property type="match status" value="1"/>
</dbReference>
<proteinExistence type="inferred from homology"/>
<accession>A0QIY5</accession>
<organism>
    <name type="scientific">Mycobacterium avium (strain 104)</name>
    <dbReference type="NCBI Taxonomy" id="243243"/>
    <lineage>
        <taxon>Bacteria</taxon>
        <taxon>Bacillati</taxon>
        <taxon>Actinomycetota</taxon>
        <taxon>Actinomycetes</taxon>
        <taxon>Mycobacteriales</taxon>
        <taxon>Mycobacteriaceae</taxon>
        <taxon>Mycobacterium</taxon>
        <taxon>Mycobacterium avium complex (MAC)</taxon>
    </lineage>
</organism>